<feature type="chain" id="PRO_0000288250" description="tRNA (guanine-N(7)-)-methyltransferase">
    <location>
        <begin position="1"/>
        <end position="239"/>
    </location>
</feature>
<feature type="region of interest" description="Interaction with RNA" evidence="2">
    <location>
        <begin position="150"/>
        <end position="155"/>
    </location>
</feature>
<feature type="active site" evidence="1">
    <location>
        <position position="144"/>
    </location>
</feature>
<feature type="binding site" evidence="2">
    <location>
        <position position="69"/>
    </location>
    <ligand>
        <name>S-adenosyl-L-methionine</name>
        <dbReference type="ChEBI" id="CHEBI:59789"/>
    </ligand>
</feature>
<feature type="binding site" evidence="2">
    <location>
        <position position="94"/>
    </location>
    <ligand>
        <name>S-adenosyl-L-methionine</name>
        <dbReference type="ChEBI" id="CHEBI:59789"/>
    </ligand>
</feature>
<feature type="binding site" evidence="2">
    <location>
        <position position="121"/>
    </location>
    <ligand>
        <name>S-adenosyl-L-methionine</name>
        <dbReference type="ChEBI" id="CHEBI:59789"/>
    </ligand>
</feature>
<feature type="binding site" evidence="2">
    <location>
        <position position="144"/>
    </location>
    <ligand>
        <name>S-adenosyl-L-methionine</name>
        <dbReference type="ChEBI" id="CHEBI:59789"/>
    </ligand>
</feature>
<feature type="binding site" evidence="2">
    <location>
        <position position="148"/>
    </location>
    <ligand>
        <name>substrate</name>
    </ligand>
</feature>
<feature type="binding site" evidence="2">
    <location>
        <position position="180"/>
    </location>
    <ligand>
        <name>substrate</name>
    </ligand>
</feature>
<feature type="binding site" evidence="2">
    <location>
        <begin position="217"/>
        <end position="220"/>
    </location>
    <ligand>
        <name>substrate</name>
    </ligand>
</feature>
<sequence>MINDVISPEFDENGRALRRIRSFVRRQGRLTKGQQLALDSYWPVMGVEYQAAPVDLNTLFGREAPIVLEIGFGMGTSLVTMATNNPQQNFLGIEVHSPGVGACLSSAHDAGLSNLRIMCHDAVEVLENMIPEASLDMVQLFFPDPWHKARHNKRRIVQTPFVELVKSKLKVGGVFHMATDWQPYAEHMLEVMSGVSGYLNLSEQNDYVPRPDSRPLTKFELRGQRLGHGVWDLMFERKE</sequence>
<organism>
    <name type="scientific">Yersinia pestis bv. Antiqua (strain Antiqua)</name>
    <dbReference type="NCBI Taxonomy" id="360102"/>
    <lineage>
        <taxon>Bacteria</taxon>
        <taxon>Pseudomonadati</taxon>
        <taxon>Pseudomonadota</taxon>
        <taxon>Gammaproteobacteria</taxon>
        <taxon>Enterobacterales</taxon>
        <taxon>Yersiniaceae</taxon>
        <taxon>Yersinia</taxon>
    </lineage>
</organism>
<accession>Q1CB91</accession>
<gene>
    <name evidence="2" type="primary">trmB</name>
    <name type="ordered locus">YPA_0313</name>
</gene>
<protein>
    <recommendedName>
        <fullName evidence="2">tRNA (guanine-N(7)-)-methyltransferase</fullName>
        <ecNumber evidence="2">2.1.1.33</ecNumber>
    </recommendedName>
    <alternativeName>
        <fullName evidence="2">tRNA (guanine(46)-N(7))-methyltransferase</fullName>
    </alternativeName>
    <alternativeName>
        <fullName evidence="2">tRNA(m7G46)-methyltransferase</fullName>
    </alternativeName>
</protein>
<comment type="function">
    <text evidence="2">Catalyzes the formation of N(7)-methylguanine at position 46 (m7G46) in tRNA.</text>
</comment>
<comment type="catalytic activity">
    <reaction evidence="2">
        <text>guanosine(46) in tRNA + S-adenosyl-L-methionine = N(7)-methylguanosine(46) in tRNA + S-adenosyl-L-homocysteine</text>
        <dbReference type="Rhea" id="RHEA:42708"/>
        <dbReference type="Rhea" id="RHEA-COMP:10188"/>
        <dbReference type="Rhea" id="RHEA-COMP:10189"/>
        <dbReference type="ChEBI" id="CHEBI:57856"/>
        <dbReference type="ChEBI" id="CHEBI:59789"/>
        <dbReference type="ChEBI" id="CHEBI:74269"/>
        <dbReference type="ChEBI" id="CHEBI:74480"/>
        <dbReference type="EC" id="2.1.1.33"/>
    </reaction>
</comment>
<comment type="pathway">
    <text evidence="2">tRNA modification; N(7)-methylguanine-tRNA biosynthesis.</text>
</comment>
<comment type="subunit">
    <text evidence="2">Monomer.</text>
</comment>
<comment type="similarity">
    <text evidence="2">Belongs to the class I-like SAM-binding methyltransferase superfamily. TrmB family.</text>
</comment>
<proteinExistence type="inferred from homology"/>
<dbReference type="EC" id="2.1.1.33" evidence="2"/>
<dbReference type="EMBL" id="CP000308">
    <property type="protein sequence ID" value="ABG12281.1"/>
    <property type="molecule type" value="Genomic_DNA"/>
</dbReference>
<dbReference type="RefSeq" id="WP_002209991.1">
    <property type="nucleotide sequence ID" value="NZ_CP009906.1"/>
</dbReference>
<dbReference type="SMR" id="Q1CB91"/>
<dbReference type="GeneID" id="57973690"/>
<dbReference type="KEGG" id="ypa:YPA_0313"/>
<dbReference type="UniPathway" id="UPA00989"/>
<dbReference type="Proteomes" id="UP000001971">
    <property type="component" value="Chromosome"/>
</dbReference>
<dbReference type="GO" id="GO:0043527">
    <property type="term" value="C:tRNA methyltransferase complex"/>
    <property type="evidence" value="ECO:0007669"/>
    <property type="project" value="TreeGrafter"/>
</dbReference>
<dbReference type="GO" id="GO:0008176">
    <property type="term" value="F:tRNA (guanine(46)-N7)-methyltransferase activity"/>
    <property type="evidence" value="ECO:0007669"/>
    <property type="project" value="UniProtKB-UniRule"/>
</dbReference>
<dbReference type="FunFam" id="3.40.50.150:FF:000024">
    <property type="entry name" value="tRNA (guanine-N(7)-)-methyltransferase"/>
    <property type="match status" value="1"/>
</dbReference>
<dbReference type="Gene3D" id="3.40.50.150">
    <property type="entry name" value="Vaccinia Virus protein VP39"/>
    <property type="match status" value="1"/>
</dbReference>
<dbReference type="HAMAP" id="MF_01057">
    <property type="entry name" value="tRNA_methyltr_TrmB"/>
    <property type="match status" value="1"/>
</dbReference>
<dbReference type="InterPro" id="IPR029063">
    <property type="entry name" value="SAM-dependent_MTases_sf"/>
</dbReference>
<dbReference type="InterPro" id="IPR003358">
    <property type="entry name" value="tRNA_(Gua-N-7)_MeTrfase_Trmb"/>
</dbReference>
<dbReference type="InterPro" id="IPR055361">
    <property type="entry name" value="tRNA_methyltr_TrmB_bact"/>
</dbReference>
<dbReference type="NCBIfam" id="TIGR00091">
    <property type="entry name" value="tRNA (guanosine(46)-N7)-methyltransferase TrmB"/>
    <property type="match status" value="1"/>
</dbReference>
<dbReference type="PANTHER" id="PTHR23417">
    <property type="entry name" value="3-DEOXY-D-MANNO-OCTULOSONIC-ACID TRANSFERASE/TRNA GUANINE-N 7 - -METHYLTRANSFERASE"/>
    <property type="match status" value="1"/>
</dbReference>
<dbReference type="PANTHER" id="PTHR23417:SF14">
    <property type="entry name" value="PENTACOTRIPEPTIDE-REPEAT REGION OF PRORP DOMAIN-CONTAINING PROTEIN"/>
    <property type="match status" value="1"/>
</dbReference>
<dbReference type="Pfam" id="PF02390">
    <property type="entry name" value="Methyltransf_4"/>
    <property type="match status" value="1"/>
</dbReference>
<dbReference type="SUPFAM" id="SSF53335">
    <property type="entry name" value="S-adenosyl-L-methionine-dependent methyltransferases"/>
    <property type="match status" value="1"/>
</dbReference>
<dbReference type="PROSITE" id="PS51625">
    <property type="entry name" value="SAM_MT_TRMB"/>
    <property type="match status" value="1"/>
</dbReference>
<reference key="1">
    <citation type="journal article" date="2006" name="J. Bacteriol.">
        <title>Complete genome sequence of Yersinia pestis strains Antiqua and Nepal516: evidence of gene reduction in an emerging pathogen.</title>
        <authorList>
            <person name="Chain P.S.G."/>
            <person name="Hu P."/>
            <person name="Malfatti S.A."/>
            <person name="Radnedge L."/>
            <person name="Larimer F."/>
            <person name="Vergez L.M."/>
            <person name="Worsham P."/>
            <person name="Chu M.C."/>
            <person name="Andersen G.L."/>
        </authorList>
    </citation>
    <scope>NUCLEOTIDE SEQUENCE [LARGE SCALE GENOMIC DNA]</scope>
    <source>
        <strain>Antiqua</strain>
    </source>
</reference>
<name>TRMB_YERPA</name>
<evidence type="ECO:0000250" key="1"/>
<evidence type="ECO:0000255" key="2">
    <source>
        <dbReference type="HAMAP-Rule" id="MF_01057"/>
    </source>
</evidence>
<keyword id="KW-0489">Methyltransferase</keyword>
<keyword id="KW-0949">S-adenosyl-L-methionine</keyword>
<keyword id="KW-0808">Transferase</keyword>
<keyword id="KW-0819">tRNA processing</keyword>